<gene>
    <name type="primary">RAB1A</name>
    <name type="synonym">RAB1</name>
</gene>
<dbReference type="EC" id="3.6.5.2" evidence="2"/>
<dbReference type="EMBL" id="X56384">
    <property type="protein sequence ID" value="CAB56775.1"/>
    <property type="molecule type" value="mRNA"/>
</dbReference>
<dbReference type="RefSeq" id="NP_001003153.1">
    <property type="nucleotide sequence ID" value="NM_001003153.1"/>
</dbReference>
<dbReference type="SMR" id="P62822"/>
<dbReference type="BioGRID" id="139697">
    <property type="interactions" value="1"/>
</dbReference>
<dbReference type="FunCoup" id="P62822">
    <property type="interactions" value="3101"/>
</dbReference>
<dbReference type="IntAct" id="P62822">
    <property type="interactions" value="2"/>
</dbReference>
<dbReference type="STRING" id="9615.ENSCAFP00000040655"/>
<dbReference type="PaxDb" id="9612-ENSCAFP00000004753"/>
<dbReference type="Ensembl" id="ENSCAFT00030030532.1">
    <property type="protein sequence ID" value="ENSCAFP00030026622.1"/>
    <property type="gene ID" value="ENSCAFG00030016473.1"/>
</dbReference>
<dbReference type="Ensembl" id="ENSCAFT00040010139.1">
    <property type="protein sequence ID" value="ENSCAFP00040008794.1"/>
    <property type="gene ID" value="ENSCAFG00040005347.1"/>
</dbReference>
<dbReference type="GeneID" id="403774"/>
<dbReference type="KEGG" id="cfa:403774"/>
<dbReference type="CTD" id="5861"/>
<dbReference type="eggNOG" id="KOG0084">
    <property type="taxonomic scope" value="Eukaryota"/>
</dbReference>
<dbReference type="HOGENOM" id="CLU_041217_23_1_1"/>
<dbReference type="InParanoid" id="P62822"/>
<dbReference type="OrthoDB" id="9989112at2759"/>
<dbReference type="Reactome" id="R-CFA-162658">
    <property type="pathway name" value="Golgi Cisternae Pericentriolar Stack Reorganization"/>
</dbReference>
<dbReference type="Reactome" id="R-CFA-204005">
    <property type="pathway name" value="COPII-mediated vesicle transport"/>
</dbReference>
<dbReference type="Reactome" id="R-CFA-6807878">
    <property type="pathway name" value="COPI-mediated anterograde transport"/>
</dbReference>
<dbReference type="Reactome" id="R-CFA-6811434">
    <property type="pathway name" value="COPI-dependent Golgi-to-ER retrograde traffic"/>
</dbReference>
<dbReference type="Reactome" id="R-CFA-8873719">
    <property type="pathway name" value="RAB geranylgeranylation"/>
</dbReference>
<dbReference type="Reactome" id="R-CFA-8876198">
    <property type="pathway name" value="RAB GEFs exchange GTP for GDP on RABs"/>
</dbReference>
<dbReference type="Proteomes" id="UP000002254">
    <property type="component" value="Unplaced"/>
</dbReference>
<dbReference type="Proteomes" id="UP000694429">
    <property type="component" value="Chromosome 10"/>
</dbReference>
<dbReference type="Proteomes" id="UP000694542">
    <property type="component" value="Chromosome 10"/>
</dbReference>
<dbReference type="Proteomes" id="UP000805418">
    <property type="component" value="Unplaced"/>
</dbReference>
<dbReference type="Bgee" id="ENSCAFG00000003187">
    <property type="expression patterns" value="Expressed in lymph node and 46 other cell types or tissues"/>
</dbReference>
<dbReference type="GO" id="GO:0005829">
    <property type="term" value="C:cytosol"/>
    <property type="evidence" value="ECO:0007669"/>
    <property type="project" value="UniProtKB-SubCell"/>
</dbReference>
<dbReference type="GO" id="GO:0005769">
    <property type="term" value="C:early endosome"/>
    <property type="evidence" value="ECO:0007669"/>
    <property type="project" value="UniProtKB-SubCell"/>
</dbReference>
<dbReference type="GO" id="GO:0012505">
    <property type="term" value="C:endomembrane system"/>
    <property type="evidence" value="ECO:0000318"/>
    <property type="project" value="GO_Central"/>
</dbReference>
<dbReference type="GO" id="GO:0005783">
    <property type="term" value="C:endoplasmic reticulum"/>
    <property type="evidence" value="ECO:0007669"/>
    <property type="project" value="UniProtKB-SubCell"/>
</dbReference>
<dbReference type="GO" id="GO:0070382">
    <property type="term" value="C:exocytic vesicle"/>
    <property type="evidence" value="ECO:0000314"/>
    <property type="project" value="CAFA"/>
</dbReference>
<dbReference type="GO" id="GO:0005794">
    <property type="term" value="C:Golgi apparatus"/>
    <property type="evidence" value="ECO:0007669"/>
    <property type="project" value="UniProtKB-SubCell"/>
</dbReference>
<dbReference type="GO" id="GO:0042470">
    <property type="term" value="C:melanosome"/>
    <property type="evidence" value="ECO:0007669"/>
    <property type="project" value="UniProtKB-SubCell"/>
</dbReference>
<dbReference type="GO" id="GO:0016020">
    <property type="term" value="C:membrane"/>
    <property type="evidence" value="ECO:0007669"/>
    <property type="project" value="UniProtKB-SubCell"/>
</dbReference>
<dbReference type="GO" id="GO:0003925">
    <property type="term" value="F:G protein activity"/>
    <property type="evidence" value="ECO:0007669"/>
    <property type="project" value="UniProtKB-EC"/>
</dbReference>
<dbReference type="GO" id="GO:0005525">
    <property type="term" value="F:GTP binding"/>
    <property type="evidence" value="ECO:0007669"/>
    <property type="project" value="UniProtKB-KW"/>
</dbReference>
<dbReference type="GO" id="GO:0003924">
    <property type="term" value="F:GTPase activity"/>
    <property type="evidence" value="ECO:0000250"/>
    <property type="project" value="UniProtKB"/>
</dbReference>
<dbReference type="GO" id="GO:0000045">
    <property type="term" value="P:autophagosome assembly"/>
    <property type="evidence" value="ECO:0000250"/>
    <property type="project" value="UniProtKB"/>
</dbReference>
<dbReference type="GO" id="GO:0006914">
    <property type="term" value="P:autophagy"/>
    <property type="evidence" value="ECO:0000250"/>
    <property type="project" value="UniProtKB"/>
</dbReference>
<dbReference type="GO" id="GO:0016477">
    <property type="term" value="P:cell migration"/>
    <property type="evidence" value="ECO:0000250"/>
    <property type="project" value="UniProtKB"/>
</dbReference>
<dbReference type="GO" id="GO:0042742">
    <property type="term" value="P:defense response to bacterium"/>
    <property type="evidence" value="ECO:0000250"/>
    <property type="project" value="UniProtKB"/>
</dbReference>
<dbReference type="GO" id="GO:0006897">
    <property type="term" value="P:endocytosis"/>
    <property type="evidence" value="ECO:0000250"/>
    <property type="project" value="UniProtKB"/>
</dbReference>
<dbReference type="GO" id="GO:0006888">
    <property type="term" value="P:endoplasmic reticulum to Golgi vesicle-mediated transport"/>
    <property type="evidence" value="ECO:0000250"/>
    <property type="project" value="UniProtKB"/>
</dbReference>
<dbReference type="GO" id="GO:0007030">
    <property type="term" value="P:Golgi organization"/>
    <property type="evidence" value="ECO:0000250"/>
    <property type="project" value="UniProtKB"/>
</dbReference>
<dbReference type="GO" id="GO:0030252">
    <property type="term" value="P:growth hormone secretion"/>
    <property type="evidence" value="ECO:0000250"/>
    <property type="project" value="UniProtKB"/>
</dbReference>
<dbReference type="GO" id="GO:0006886">
    <property type="term" value="P:intracellular protein transport"/>
    <property type="evidence" value="ECO:0000318"/>
    <property type="project" value="GO_Central"/>
</dbReference>
<dbReference type="GO" id="GO:0032757">
    <property type="term" value="P:positive regulation of interleukin-8 production"/>
    <property type="evidence" value="ECO:0000250"/>
    <property type="project" value="UniProtKB"/>
</dbReference>
<dbReference type="GO" id="GO:0047496">
    <property type="term" value="P:vesicle transport along microtubule"/>
    <property type="evidence" value="ECO:0000250"/>
    <property type="project" value="UniProtKB"/>
</dbReference>
<dbReference type="CDD" id="cd01869">
    <property type="entry name" value="Rab1_Ypt1"/>
    <property type="match status" value="1"/>
</dbReference>
<dbReference type="FunFam" id="3.40.50.300:FF:000069">
    <property type="entry name" value="Ras GTP-binding protein YPT1"/>
    <property type="match status" value="1"/>
</dbReference>
<dbReference type="Gene3D" id="3.40.50.300">
    <property type="entry name" value="P-loop containing nucleotide triphosphate hydrolases"/>
    <property type="match status" value="1"/>
</dbReference>
<dbReference type="InterPro" id="IPR027417">
    <property type="entry name" value="P-loop_NTPase"/>
</dbReference>
<dbReference type="InterPro" id="IPR050227">
    <property type="entry name" value="Rab"/>
</dbReference>
<dbReference type="InterPro" id="IPR005225">
    <property type="entry name" value="Small_GTP-bd"/>
</dbReference>
<dbReference type="InterPro" id="IPR001806">
    <property type="entry name" value="Small_GTPase"/>
</dbReference>
<dbReference type="NCBIfam" id="TIGR00231">
    <property type="entry name" value="small_GTP"/>
    <property type="match status" value="1"/>
</dbReference>
<dbReference type="PANTHER" id="PTHR47977">
    <property type="entry name" value="RAS-RELATED PROTEIN RAB"/>
    <property type="match status" value="1"/>
</dbReference>
<dbReference type="Pfam" id="PF00071">
    <property type="entry name" value="Ras"/>
    <property type="match status" value="1"/>
</dbReference>
<dbReference type="PRINTS" id="PR00449">
    <property type="entry name" value="RASTRNSFRMNG"/>
</dbReference>
<dbReference type="SMART" id="SM00177">
    <property type="entry name" value="ARF"/>
    <property type="match status" value="1"/>
</dbReference>
<dbReference type="SMART" id="SM00175">
    <property type="entry name" value="RAB"/>
    <property type="match status" value="1"/>
</dbReference>
<dbReference type="SMART" id="SM00176">
    <property type="entry name" value="RAN"/>
    <property type="match status" value="1"/>
</dbReference>
<dbReference type="SMART" id="SM00173">
    <property type="entry name" value="RAS"/>
    <property type="match status" value="1"/>
</dbReference>
<dbReference type="SMART" id="SM00174">
    <property type="entry name" value="RHO"/>
    <property type="match status" value="1"/>
</dbReference>
<dbReference type="SUPFAM" id="SSF52540">
    <property type="entry name" value="P-loop containing nucleoside triphosphate hydrolases"/>
    <property type="match status" value="1"/>
</dbReference>
<dbReference type="PROSITE" id="PS51419">
    <property type="entry name" value="RAB"/>
    <property type="match status" value="1"/>
</dbReference>
<reference key="1">
    <citation type="journal article" date="1990" name="Mol. Cell. Biol.">
        <title>Molecular cloning of YPT1/SEC4-related cDNAs from an epithelial cell line.</title>
        <authorList>
            <person name="Chavrier P."/>
            <person name="Vingron M."/>
            <person name="Sander C."/>
            <person name="Simons K."/>
            <person name="Zerial M."/>
        </authorList>
    </citation>
    <scope>NUCLEOTIDE SEQUENCE [MRNA]</scope>
    <source>
        <strain>Cocker spaniel</strain>
        <tissue>Kidney</tissue>
    </source>
</reference>
<reference key="2">
    <citation type="journal article" date="1991" name="Proc. Natl. Acad. Sci. U.S.A.">
        <title>Isoprenoid modification of rab proteins terminating in CC or CXC motifs.</title>
        <authorList>
            <person name="Khosravi-Far R."/>
            <person name="Lutz R.J."/>
            <person name="Cox A.D."/>
            <person name="Conroy L."/>
            <person name="Bourne J.R."/>
            <person name="Sinensky M."/>
            <person name="Balch W.E."/>
            <person name="Buss J.E."/>
            <person name="Der C.J."/>
        </authorList>
    </citation>
    <scope>ISOPRENYLATION AT CYS-204 AND CYS-205</scope>
</reference>
<reference key="3">
    <citation type="journal article" date="1992" name="J. Cell Biol.">
        <title>GTP-binding mutants of rab1 and rab2 are potent inhibitors of vesicular transport from the endoplasmic reticulum to the Golgi complex.</title>
        <authorList>
            <person name="Tisdale E.J."/>
            <person name="Bourne J.R."/>
            <person name="Khosravi-Far R."/>
            <person name="Der C.J."/>
            <person name="Balch W.E."/>
        </authorList>
    </citation>
    <scope>FUNCTION</scope>
    <scope>MUTAGENESIS OF ASN-124</scope>
    <scope>SUBCELLULAR LOCATION</scope>
</reference>
<reference key="4">
    <citation type="journal article" date="2004" name="Genetics">
        <title>Genetic analysis of yeast Yip1p function reveals a requirement for Golgi-localized rab proteins and rab-Guanine nucleotide dissociation inhibitor.</title>
        <authorList>
            <person name="Chen C.Z."/>
            <person name="Calero M."/>
            <person name="DeRegis C.J."/>
            <person name="Heidtman M."/>
            <person name="Barlowe C."/>
            <person name="Collins R.N."/>
        </authorList>
    </citation>
    <scope>INTERACTION WITH YIPF5</scope>
</reference>
<keyword id="KW-0007">Acetylation</keyword>
<keyword id="KW-0072">Autophagy</keyword>
<keyword id="KW-0963">Cytoplasm</keyword>
<keyword id="KW-0256">Endoplasmic reticulum</keyword>
<keyword id="KW-0967">Endosome</keyword>
<keyword id="KW-0931">ER-Golgi transport</keyword>
<keyword id="KW-0333">Golgi apparatus</keyword>
<keyword id="KW-0342">GTP-binding</keyword>
<keyword id="KW-0378">Hydrolase</keyword>
<keyword id="KW-1017">Isopeptide bond</keyword>
<keyword id="KW-0449">Lipoprotein</keyword>
<keyword id="KW-0460">Magnesium</keyword>
<keyword id="KW-0472">Membrane</keyword>
<keyword id="KW-0479">Metal-binding</keyword>
<keyword id="KW-0547">Nucleotide-binding</keyword>
<keyword id="KW-0597">Phosphoprotein</keyword>
<keyword id="KW-0636">Prenylation</keyword>
<keyword id="KW-0653">Protein transport</keyword>
<keyword id="KW-1185">Reference proteome</keyword>
<keyword id="KW-0813">Transport</keyword>
<keyword id="KW-0832">Ubl conjugation</keyword>
<feature type="initiator methionine" description="Removed" evidence="2">
    <location>
        <position position="1"/>
    </location>
</feature>
<feature type="chain" id="PRO_0000121055" description="Ras-related protein Rab-1A">
    <location>
        <begin position="2"/>
        <end position="205"/>
    </location>
</feature>
<feature type="region of interest" description="Disordered" evidence="4">
    <location>
        <begin position="178"/>
        <end position="205"/>
    </location>
</feature>
<feature type="short sequence motif" description="Switch 1" evidence="2">
    <location>
        <begin position="34"/>
        <end position="48"/>
    </location>
</feature>
<feature type="short sequence motif" description="Switch 2" evidence="2">
    <location>
        <begin position="66"/>
        <end position="83"/>
    </location>
</feature>
<feature type="binding site" evidence="2">
    <location>
        <position position="20"/>
    </location>
    <ligand>
        <name>GTP</name>
        <dbReference type="ChEBI" id="CHEBI:37565"/>
    </ligand>
</feature>
<feature type="binding site" evidence="2">
    <location>
        <position position="21"/>
    </location>
    <ligand>
        <name>GTP</name>
        <dbReference type="ChEBI" id="CHEBI:37565"/>
    </ligand>
</feature>
<feature type="binding site" evidence="2">
    <location>
        <position position="23"/>
    </location>
    <ligand>
        <name>GTP</name>
        <dbReference type="ChEBI" id="CHEBI:37565"/>
    </ligand>
</feature>
<feature type="binding site" evidence="2">
    <location>
        <position position="24"/>
    </location>
    <ligand>
        <name>GTP</name>
        <dbReference type="ChEBI" id="CHEBI:37565"/>
    </ligand>
</feature>
<feature type="binding site" evidence="2">
    <location>
        <position position="25"/>
    </location>
    <ligand>
        <name>GTP</name>
        <dbReference type="ChEBI" id="CHEBI:37565"/>
    </ligand>
</feature>
<feature type="binding site" evidence="2">
    <location>
        <position position="25"/>
    </location>
    <ligand>
        <name>Mg(2+)</name>
        <dbReference type="ChEBI" id="CHEBI:18420"/>
    </ligand>
</feature>
<feature type="binding site" evidence="2">
    <location>
        <position position="26"/>
    </location>
    <ligand>
        <name>GTP</name>
        <dbReference type="ChEBI" id="CHEBI:37565"/>
    </ligand>
</feature>
<feature type="binding site" evidence="2">
    <location>
        <position position="38"/>
    </location>
    <ligand>
        <name>GTP</name>
        <dbReference type="ChEBI" id="CHEBI:37565"/>
    </ligand>
</feature>
<feature type="binding site" evidence="2">
    <location>
        <position position="43"/>
    </location>
    <ligand>
        <name>GTP</name>
        <dbReference type="ChEBI" id="CHEBI:37565"/>
    </ligand>
</feature>
<feature type="binding site" evidence="2">
    <location>
        <position position="43"/>
    </location>
    <ligand>
        <name>Mg(2+)</name>
        <dbReference type="ChEBI" id="CHEBI:18420"/>
    </ligand>
</feature>
<feature type="binding site" evidence="2">
    <location>
        <position position="66"/>
    </location>
    <ligand>
        <name>Mg(2+)</name>
        <dbReference type="ChEBI" id="CHEBI:18420"/>
    </ligand>
</feature>
<feature type="binding site" evidence="2">
    <location>
        <position position="69"/>
    </location>
    <ligand>
        <name>GTP</name>
        <dbReference type="ChEBI" id="CHEBI:37565"/>
    </ligand>
</feature>
<feature type="binding site" evidence="2">
    <location>
        <position position="124"/>
    </location>
    <ligand>
        <name>GTP</name>
        <dbReference type="ChEBI" id="CHEBI:37565"/>
    </ligand>
</feature>
<feature type="binding site" evidence="2">
    <location>
        <position position="125"/>
    </location>
    <ligand>
        <name>GTP</name>
        <dbReference type="ChEBI" id="CHEBI:37565"/>
    </ligand>
</feature>
<feature type="binding site" evidence="2">
    <location>
        <position position="127"/>
    </location>
    <ligand>
        <name>GTP</name>
        <dbReference type="ChEBI" id="CHEBI:37565"/>
    </ligand>
</feature>
<feature type="binding site" evidence="2">
    <location>
        <position position="155"/>
    </location>
    <ligand>
        <name>GTP</name>
        <dbReference type="ChEBI" id="CHEBI:37565"/>
    </ligand>
</feature>
<feature type="binding site" evidence="2">
    <location>
        <position position="156"/>
    </location>
    <ligand>
        <name>GTP</name>
        <dbReference type="ChEBI" id="CHEBI:37565"/>
    </ligand>
</feature>
<feature type="modified residue" description="N-acetylserine" evidence="2">
    <location>
        <position position="2"/>
    </location>
</feature>
<feature type="modified residue" description="Phosphoserine" evidence="2">
    <location>
        <position position="194"/>
    </location>
</feature>
<feature type="lipid moiety-binding region" description="S-geranylgeranyl cysteine" evidence="7">
    <location>
        <position position="204"/>
    </location>
</feature>
<feature type="lipid moiety-binding region" description="S-geranylgeranyl cysteine" evidence="7">
    <location>
        <position position="205"/>
    </location>
</feature>
<feature type="cross-link" description="Glycyl lysine isopeptide (Lys-Gly) (interchain with G-Cter in ubiquitin)" evidence="1">
    <location>
        <position position="49"/>
    </location>
</feature>
<feature type="cross-link" description="Glycyl lysine isopeptide (Lys-Gly) (interchain with G-Cter in ubiquitin)" evidence="1">
    <location>
        <position position="61"/>
    </location>
</feature>
<feature type="mutagenesis site" description="Dominant negative mutant that impairs vesicular protein transport." evidence="5">
    <original>N</original>
    <variation>I</variation>
    <location>
        <position position="124"/>
    </location>
</feature>
<comment type="function">
    <text evidence="2 3 5">The small GTPases Rab are key regulators of intracellular membrane trafficking, from the formation of transport vesicles to their fusion with membranes (PubMed:1429835). Rabs cycle between an inactive GDP-bound form and an active GTP-bound form that is able to recruit to membranes different sets of downstream effectors directly responsible for vesicle formation, movement, tethering and fusion (PubMed:1429835). RAB1A regulates vesicular protein transport from the endoplasmic reticulum (ER) to the Golgi compartment and on to the cell surface, and plays a role in IL-8 and growth hormone secretion (PubMed:1429835). Required to modulate the compacted morphology of the Golgi. Regulates the level of CASR present at the cell membrane. Plays a role in cell adhesion and cell migration, via its role in protein trafficking. Plays a role in autophagosome assembly and cellular defense reactions against pathogenic bacteria (By similarity). Plays a role in microtubule-dependent protein transport by early endosomes and in anterograde melanosome transport (By similarity).</text>
</comment>
<comment type="catalytic activity">
    <reaction evidence="2">
        <text>GTP + H2O = GDP + phosphate + H(+)</text>
        <dbReference type="Rhea" id="RHEA:19669"/>
        <dbReference type="ChEBI" id="CHEBI:15377"/>
        <dbReference type="ChEBI" id="CHEBI:15378"/>
        <dbReference type="ChEBI" id="CHEBI:37565"/>
        <dbReference type="ChEBI" id="CHEBI:43474"/>
        <dbReference type="ChEBI" id="CHEBI:58189"/>
        <dbReference type="EC" id="3.6.5.2"/>
    </reaction>
    <physiologicalReaction direction="left-to-right" evidence="2">
        <dbReference type="Rhea" id="RHEA:19670"/>
    </physiologicalReaction>
</comment>
<comment type="cofactor">
    <cofactor evidence="2">
        <name>Mg(2+)</name>
        <dbReference type="ChEBI" id="CHEBI:18420"/>
    </cofactor>
</comment>
<comment type="activity regulation">
    <text evidence="2">Regulated by guanine nucleotide exchange factors (GEFs) which promote the exchange of bound GDP for free GTP. Regulated by GTPase activating proteins (GAPs) which increase the GTP hydrolysis activity. Inhibited by GDP dissociation inhibitors (GDIs).</text>
</comment>
<comment type="subunit">
    <text evidence="2 6">May interact with YIPF5 (PubMed:15611160). Interacts with C9orf72; the interaction mediates recruitment of RAB1A to the ATG1/ULK1 kinase complex (By similarity). Interacts with GDI1; this promotes dissociation from membranes (By similarity).</text>
</comment>
<comment type="subcellular location">
    <subcellularLocation>
        <location evidence="2">Golgi apparatus</location>
    </subcellularLocation>
    <subcellularLocation>
        <location evidence="2">Endoplasmic reticulum</location>
    </subcellularLocation>
    <subcellularLocation>
        <location evidence="2">Early endosome</location>
    </subcellularLocation>
    <subcellularLocation>
        <location evidence="5">Cytoplasm</location>
        <location evidence="5">Cytosol</location>
    </subcellularLocation>
    <subcellularLocation>
        <location evidence="5">Membrane</location>
    </subcellularLocation>
    <subcellularLocation>
        <location evidence="3">Melanosome</location>
    </subcellularLocation>
    <text evidence="5">Alternates between membrane-associated and cytosolic forms.</text>
</comment>
<comment type="domain">
    <text evidence="2">Switch 1, switch 2 and the interswitch regions are characteristic of Rab GTPases and mediate the interactions with Rab downstream effectors. The switch regions undergo conformational changes upon nucleotide binding which drive interaction with specific sets of effector proteins, with most effectors only binding to GTP-bound Rab.</text>
</comment>
<comment type="PTM">
    <text evidence="2">Phosphorylated by CDK1 kinase during mitosis.</text>
</comment>
<comment type="PTM">
    <text evidence="1">Ubiquitinated via 'Lys-11'-linked ubiquitination on Lys-49 and Lys-61; impairing the recruitment of guanosine diphosphate (GDP) dissociation inhibitor 1/GDI1.</text>
</comment>
<comment type="similarity">
    <text evidence="8">Belongs to the small GTPase superfamily. Rab family.</text>
</comment>
<protein>
    <recommendedName>
        <fullName>Ras-related protein Rab-1A</fullName>
        <ecNumber evidence="2">3.6.5.2</ecNumber>
    </recommendedName>
</protein>
<sequence length="205" mass="22678">MSSMNPEYDYLFKLLLIGDSGVGKSCLLLRFADDTYTESYISTIGVDFKIRTIELDGKTIKLQIWDTAGQERFRTITSSYYRGAHGIIVVYDVTDQESFNNVKQWLQEIDRYASENVNKLLVGNKCDLTTKKVVDYTTAKEFADSLGIPFLETSAKNATNVEQSFMTMAAEIKKRMGPGATAGGAEKSNVKIQSTPVKQSGGGCC</sequence>
<accession>P62822</accession>
<accession>P05711</accession>
<organism>
    <name type="scientific">Canis lupus familiaris</name>
    <name type="common">Dog</name>
    <name type="synonym">Canis familiaris</name>
    <dbReference type="NCBI Taxonomy" id="9615"/>
    <lineage>
        <taxon>Eukaryota</taxon>
        <taxon>Metazoa</taxon>
        <taxon>Chordata</taxon>
        <taxon>Craniata</taxon>
        <taxon>Vertebrata</taxon>
        <taxon>Euteleostomi</taxon>
        <taxon>Mammalia</taxon>
        <taxon>Eutheria</taxon>
        <taxon>Laurasiatheria</taxon>
        <taxon>Carnivora</taxon>
        <taxon>Caniformia</taxon>
        <taxon>Canidae</taxon>
        <taxon>Canis</taxon>
    </lineage>
</organism>
<proteinExistence type="evidence at protein level"/>
<evidence type="ECO:0000250" key="1">
    <source>
        <dbReference type="UniProtKB" id="P51153"/>
    </source>
</evidence>
<evidence type="ECO:0000250" key="2">
    <source>
        <dbReference type="UniProtKB" id="P62820"/>
    </source>
</evidence>
<evidence type="ECO:0000250" key="3">
    <source>
        <dbReference type="UniProtKB" id="P62821"/>
    </source>
</evidence>
<evidence type="ECO:0000256" key="4">
    <source>
        <dbReference type="SAM" id="MobiDB-lite"/>
    </source>
</evidence>
<evidence type="ECO:0000269" key="5">
    <source>
    </source>
</evidence>
<evidence type="ECO:0000269" key="6">
    <source>
    </source>
</evidence>
<evidence type="ECO:0000269" key="7">
    <source>
    </source>
</evidence>
<evidence type="ECO:0000305" key="8"/>
<name>RAB1A_CANLF</name>